<name>LFTR_TERTT</name>
<reference key="1">
    <citation type="journal article" date="2009" name="PLoS ONE">
        <title>The complete genome of Teredinibacter turnerae T7901: an intracellular endosymbiont of marine wood-boring bivalves (shipworms).</title>
        <authorList>
            <person name="Yang J.C."/>
            <person name="Madupu R."/>
            <person name="Durkin A.S."/>
            <person name="Ekborg N.A."/>
            <person name="Pedamallu C.S."/>
            <person name="Hostetler J.B."/>
            <person name="Radune D."/>
            <person name="Toms B.S."/>
            <person name="Henrissat B."/>
            <person name="Coutinho P.M."/>
            <person name="Schwarz S."/>
            <person name="Field L."/>
            <person name="Trindade-Silva A.E."/>
            <person name="Soares C.A.G."/>
            <person name="Elshahawi S."/>
            <person name="Hanora A."/>
            <person name="Schmidt E.W."/>
            <person name="Haygood M.G."/>
            <person name="Posfai J."/>
            <person name="Benner J."/>
            <person name="Madinger C."/>
            <person name="Nove J."/>
            <person name="Anton B."/>
            <person name="Chaudhary K."/>
            <person name="Foster J."/>
            <person name="Holman A."/>
            <person name="Kumar S."/>
            <person name="Lessard P.A."/>
            <person name="Luyten Y.A."/>
            <person name="Slatko B."/>
            <person name="Wood N."/>
            <person name="Wu B."/>
            <person name="Teplitski M."/>
            <person name="Mougous J.D."/>
            <person name="Ward N."/>
            <person name="Eisen J.A."/>
            <person name="Badger J.H."/>
            <person name="Distel D.L."/>
        </authorList>
    </citation>
    <scope>NUCLEOTIDE SEQUENCE [LARGE SCALE GENOMIC DNA]</scope>
    <source>
        <strain>ATCC 39867 / T7901</strain>
    </source>
</reference>
<keyword id="KW-0012">Acyltransferase</keyword>
<keyword id="KW-0963">Cytoplasm</keyword>
<keyword id="KW-1185">Reference proteome</keyword>
<keyword id="KW-0808">Transferase</keyword>
<protein>
    <recommendedName>
        <fullName evidence="1">Leucyl/phenylalanyl-tRNA--protein transferase</fullName>
        <ecNumber evidence="1">2.3.2.6</ecNumber>
    </recommendedName>
    <alternativeName>
        <fullName evidence="1">L/F-transferase</fullName>
    </alternativeName>
    <alternativeName>
        <fullName evidence="1">Leucyltransferase</fullName>
    </alternativeName>
    <alternativeName>
        <fullName evidence="1">Phenyalanyltransferase</fullName>
    </alternativeName>
</protein>
<sequence>MSQLQWLDADNLRFPPTHSALRDPDGLLAVGGDLSPARLIESYSHGIFPWYSDGQPLLWWTPDPRMVLRPAHVHRGRTLRKLLRQHPFTVTVDSAFDAVAQACGTIEREGQDGTWITQEMLAAYSELNRLGVAHSLEVWLQNELVGGLYGIALGTVFFGESMFSRVSGASKVGFSILCQQLENWGFELVDCQIHSGYLASFGAQEIPRATFEKLLAQHVWNIPRVPSAACYQSPIPTTSRPCPPLINWQMAWTAGEDLA</sequence>
<feature type="chain" id="PRO_1000212573" description="Leucyl/phenylalanyl-tRNA--protein transferase">
    <location>
        <begin position="1"/>
        <end position="259"/>
    </location>
</feature>
<proteinExistence type="inferred from homology"/>
<accession>C5BIJ8</accession>
<comment type="function">
    <text evidence="1">Functions in the N-end rule pathway of protein degradation where it conjugates Leu, Phe and, less efficiently, Met from aminoacyl-tRNAs to the N-termini of proteins containing an N-terminal arginine or lysine.</text>
</comment>
<comment type="catalytic activity">
    <reaction evidence="1">
        <text>N-terminal L-lysyl-[protein] + L-leucyl-tRNA(Leu) = N-terminal L-leucyl-L-lysyl-[protein] + tRNA(Leu) + H(+)</text>
        <dbReference type="Rhea" id="RHEA:12340"/>
        <dbReference type="Rhea" id="RHEA-COMP:9613"/>
        <dbReference type="Rhea" id="RHEA-COMP:9622"/>
        <dbReference type="Rhea" id="RHEA-COMP:12670"/>
        <dbReference type="Rhea" id="RHEA-COMP:12671"/>
        <dbReference type="ChEBI" id="CHEBI:15378"/>
        <dbReference type="ChEBI" id="CHEBI:65249"/>
        <dbReference type="ChEBI" id="CHEBI:78442"/>
        <dbReference type="ChEBI" id="CHEBI:78494"/>
        <dbReference type="ChEBI" id="CHEBI:133043"/>
        <dbReference type="EC" id="2.3.2.6"/>
    </reaction>
</comment>
<comment type="catalytic activity">
    <reaction evidence="1">
        <text>N-terminal L-arginyl-[protein] + L-leucyl-tRNA(Leu) = N-terminal L-leucyl-L-arginyl-[protein] + tRNA(Leu) + H(+)</text>
        <dbReference type="Rhea" id="RHEA:50416"/>
        <dbReference type="Rhea" id="RHEA-COMP:9613"/>
        <dbReference type="Rhea" id="RHEA-COMP:9622"/>
        <dbReference type="Rhea" id="RHEA-COMP:12672"/>
        <dbReference type="Rhea" id="RHEA-COMP:12673"/>
        <dbReference type="ChEBI" id="CHEBI:15378"/>
        <dbReference type="ChEBI" id="CHEBI:64719"/>
        <dbReference type="ChEBI" id="CHEBI:78442"/>
        <dbReference type="ChEBI" id="CHEBI:78494"/>
        <dbReference type="ChEBI" id="CHEBI:133044"/>
        <dbReference type="EC" id="2.3.2.6"/>
    </reaction>
</comment>
<comment type="catalytic activity">
    <reaction evidence="1">
        <text>L-phenylalanyl-tRNA(Phe) + an N-terminal L-alpha-aminoacyl-[protein] = an N-terminal L-phenylalanyl-L-alpha-aminoacyl-[protein] + tRNA(Phe)</text>
        <dbReference type="Rhea" id="RHEA:43632"/>
        <dbReference type="Rhea" id="RHEA-COMP:9668"/>
        <dbReference type="Rhea" id="RHEA-COMP:9699"/>
        <dbReference type="Rhea" id="RHEA-COMP:10636"/>
        <dbReference type="Rhea" id="RHEA-COMP:10637"/>
        <dbReference type="ChEBI" id="CHEBI:78442"/>
        <dbReference type="ChEBI" id="CHEBI:78531"/>
        <dbReference type="ChEBI" id="CHEBI:78597"/>
        <dbReference type="ChEBI" id="CHEBI:83561"/>
        <dbReference type="EC" id="2.3.2.6"/>
    </reaction>
</comment>
<comment type="subcellular location">
    <subcellularLocation>
        <location evidence="1">Cytoplasm</location>
    </subcellularLocation>
</comment>
<comment type="similarity">
    <text evidence="1">Belongs to the L/F-transferase family.</text>
</comment>
<evidence type="ECO:0000255" key="1">
    <source>
        <dbReference type="HAMAP-Rule" id="MF_00688"/>
    </source>
</evidence>
<organism>
    <name type="scientific">Teredinibacter turnerae (strain ATCC 39867 / T7901)</name>
    <dbReference type="NCBI Taxonomy" id="377629"/>
    <lineage>
        <taxon>Bacteria</taxon>
        <taxon>Pseudomonadati</taxon>
        <taxon>Pseudomonadota</taxon>
        <taxon>Gammaproteobacteria</taxon>
        <taxon>Cellvibrionales</taxon>
        <taxon>Cellvibrionaceae</taxon>
        <taxon>Teredinibacter</taxon>
    </lineage>
</organism>
<gene>
    <name evidence="1" type="primary">aat</name>
    <name type="ordered locus">TERTU_1967</name>
</gene>
<dbReference type="EC" id="2.3.2.6" evidence="1"/>
<dbReference type="EMBL" id="CP001614">
    <property type="protein sequence ID" value="ACR13085.1"/>
    <property type="molecule type" value="Genomic_DNA"/>
</dbReference>
<dbReference type="RefSeq" id="WP_015819198.1">
    <property type="nucleotide sequence ID" value="NC_012997.1"/>
</dbReference>
<dbReference type="SMR" id="C5BIJ8"/>
<dbReference type="STRING" id="377629.TERTU_1967"/>
<dbReference type="KEGG" id="ttu:TERTU_1967"/>
<dbReference type="eggNOG" id="COG2360">
    <property type="taxonomic scope" value="Bacteria"/>
</dbReference>
<dbReference type="HOGENOM" id="CLU_075045_0_0_6"/>
<dbReference type="OrthoDB" id="9790282at2"/>
<dbReference type="Proteomes" id="UP000009080">
    <property type="component" value="Chromosome"/>
</dbReference>
<dbReference type="GO" id="GO:0005737">
    <property type="term" value="C:cytoplasm"/>
    <property type="evidence" value="ECO:0007669"/>
    <property type="project" value="UniProtKB-SubCell"/>
</dbReference>
<dbReference type="GO" id="GO:0008914">
    <property type="term" value="F:leucyl-tRNA--protein transferase activity"/>
    <property type="evidence" value="ECO:0007669"/>
    <property type="project" value="UniProtKB-UniRule"/>
</dbReference>
<dbReference type="GO" id="GO:0030163">
    <property type="term" value="P:protein catabolic process"/>
    <property type="evidence" value="ECO:0007669"/>
    <property type="project" value="UniProtKB-UniRule"/>
</dbReference>
<dbReference type="FunFam" id="3.30.70.3550:FF:000001">
    <property type="entry name" value="Leucyl/phenylalanyl-tRNA--protein transferase"/>
    <property type="match status" value="1"/>
</dbReference>
<dbReference type="Gene3D" id="3.40.630.70">
    <property type="entry name" value="Leucyl/phenylalanyl-tRNA-protein transferase, C-terminal domain"/>
    <property type="match status" value="1"/>
</dbReference>
<dbReference type="Gene3D" id="3.30.70.3550">
    <property type="entry name" value="Leucyl/phenylalanyl-tRNA-protein transferase, N-terminal domain"/>
    <property type="match status" value="1"/>
</dbReference>
<dbReference type="HAMAP" id="MF_00688">
    <property type="entry name" value="Leu_Phe_trans"/>
    <property type="match status" value="1"/>
</dbReference>
<dbReference type="InterPro" id="IPR016181">
    <property type="entry name" value="Acyl_CoA_acyltransferase"/>
</dbReference>
<dbReference type="InterPro" id="IPR004616">
    <property type="entry name" value="Leu/Phe-tRNA_Trfase"/>
</dbReference>
<dbReference type="InterPro" id="IPR042203">
    <property type="entry name" value="Leu/Phe-tRNA_Trfase_C"/>
</dbReference>
<dbReference type="InterPro" id="IPR042221">
    <property type="entry name" value="Leu/Phe-tRNA_Trfase_N"/>
</dbReference>
<dbReference type="NCBIfam" id="TIGR00667">
    <property type="entry name" value="aat"/>
    <property type="match status" value="1"/>
</dbReference>
<dbReference type="PANTHER" id="PTHR30098">
    <property type="entry name" value="LEUCYL/PHENYLALANYL-TRNA--PROTEIN TRANSFERASE"/>
    <property type="match status" value="1"/>
</dbReference>
<dbReference type="PANTHER" id="PTHR30098:SF2">
    <property type="entry name" value="LEUCYL_PHENYLALANYL-TRNA--PROTEIN TRANSFERASE"/>
    <property type="match status" value="1"/>
</dbReference>
<dbReference type="Pfam" id="PF03588">
    <property type="entry name" value="Leu_Phe_trans"/>
    <property type="match status" value="1"/>
</dbReference>
<dbReference type="SUPFAM" id="SSF55729">
    <property type="entry name" value="Acyl-CoA N-acyltransferases (Nat)"/>
    <property type="match status" value="1"/>
</dbReference>